<feature type="chain" id="PRO_1000047845" description="Probable septum site-determining protein MinC">
    <location>
        <begin position="1"/>
        <end position="242"/>
    </location>
</feature>
<feature type="region of interest" description="Disordered" evidence="2">
    <location>
        <begin position="120"/>
        <end position="144"/>
    </location>
</feature>
<feature type="compositionally biased region" description="Basic and acidic residues" evidence="2">
    <location>
        <begin position="120"/>
        <end position="135"/>
    </location>
</feature>
<proteinExistence type="inferred from homology"/>
<name>MINC_ECTM1</name>
<protein>
    <recommendedName>
        <fullName evidence="1">Probable septum site-determining protein MinC</fullName>
    </recommendedName>
</protein>
<comment type="function">
    <text evidence="1">Cell division inhibitor that blocks the formation of polar Z ring septums. Rapidly oscillates between the poles of the cell to destabilize FtsZ filaments that have formed before they mature into polar Z rings. Prevents FtsZ polymerization.</text>
</comment>
<comment type="subunit">
    <text evidence="1">Interacts with MinD and FtsZ.</text>
</comment>
<comment type="similarity">
    <text evidence="1">Belongs to the MinC family.</text>
</comment>
<keyword id="KW-0131">Cell cycle</keyword>
<keyword id="KW-0132">Cell division</keyword>
<keyword id="KW-0717">Septation</keyword>
<evidence type="ECO:0000255" key="1">
    <source>
        <dbReference type="HAMAP-Rule" id="MF_00267"/>
    </source>
</evidence>
<evidence type="ECO:0000256" key="2">
    <source>
        <dbReference type="SAM" id="MobiDB-lite"/>
    </source>
</evidence>
<accession>A4XRN4</accession>
<reference key="1">
    <citation type="submission" date="2007-04" db="EMBL/GenBank/DDBJ databases">
        <title>Complete sequence of Pseudomonas mendocina ymp.</title>
        <authorList>
            <consortium name="US DOE Joint Genome Institute"/>
            <person name="Copeland A."/>
            <person name="Lucas S."/>
            <person name="Lapidus A."/>
            <person name="Barry K."/>
            <person name="Glavina del Rio T."/>
            <person name="Dalin E."/>
            <person name="Tice H."/>
            <person name="Pitluck S."/>
            <person name="Kiss H."/>
            <person name="Brettin T."/>
            <person name="Detter J.C."/>
            <person name="Bruce D."/>
            <person name="Han C."/>
            <person name="Schmutz J."/>
            <person name="Larimer F."/>
            <person name="Land M."/>
            <person name="Hauser L."/>
            <person name="Kyrpides N."/>
            <person name="Mikhailova N."/>
            <person name="Hersman L."/>
            <person name="Dubois J."/>
            <person name="Maurice P."/>
            <person name="Richardson P."/>
        </authorList>
    </citation>
    <scope>NUCLEOTIDE SEQUENCE [LARGE SCALE GENOMIC DNA]</scope>
    <source>
        <strain>ymp</strain>
    </source>
</reference>
<dbReference type="EMBL" id="CP000680">
    <property type="protein sequence ID" value="ABP84000.1"/>
    <property type="molecule type" value="Genomic_DNA"/>
</dbReference>
<dbReference type="SMR" id="A4XRN4"/>
<dbReference type="STRING" id="399739.Pmen_1235"/>
<dbReference type="KEGG" id="pmy:Pmen_1235"/>
<dbReference type="PATRIC" id="fig|399739.8.peg.1248"/>
<dbReference type="eggNOG" id="COG0850">
    <property type="taxonomic scope" value="Bacteria"/>
</dbReference>
<dbReference type="HOGENOM" id="CLU_067812_0_1_6"/>
<dbReference type="OrthoDB" id="9794530at2"/>
<dbReference type="GO" id="GO:0000902">
    <property type="term" value="P:cell morphogenesis"/>
    <property type="evidence" value="ECO:0007669"/>
    <property type="project" value="InterPro"/>
</dbReference>
<dbReference type="GO" id="GO:0000917">
    <property type="term" value="P:division septum assembly"/>
    <property type="evidence" value="ECO:0007669"/>
    <property type="project" value="UniProtKB-KW"/>
</dbReference>
<dbReference type="GO" id="GO:0051302">
    <property type="term" value="P:regulation of cell division"/>
    <property type="evidence" value="ECO:0007669"/>
    <property type="project" value="InterPro"/>
</dbReference>
<dbReference type="GO" id="GO:1901891">
    <property type="term" value="P:regulation of cell septum assembly"/>
    <property type="evidence" value="ECO:0007669"/>
    <property type="project" value="InterPro"/>
</dbReference>
<dbReference type="Gene3D" id="2.160.20.70">
    <property type="match status" value="1"/>
</dbReference>
<dbReference type="Gene3D" id="3.30.70.260">
    <property type="match status" value="1"/>
</dbReference>
<dbReference type="HAMAP" id="MF_00267">
    <property type="entry name" value="MinC"/>
    <property type="match status" value="1"/>
</dbReference>
<dbReference type="InterPro" id="IPR016098">
    <property type="entry name" value="CAP/MinC_C"/>
</dbReference>
<dbReference type="InterPro" id="IPR013033">
    <property type="entry name" value="MinC"/>
</dbReference>
<dbReference type="InterPro" id="IPR036145">
    <property type="entry name" value="MinC_C_sf"/>
</dbReference>
<dbReference type="InterPro" id="IPR007874">
    <property type="entry name" value="MinC_N"/>
</dbReference>
<dbReference type="InterPro" id="IPR005526">
    <property type="entry name" value="Septum_form_inhib_MinC_C"/>
</dbReference>
<dbReference type="NCBIfam" id="TIGR01222">
    <property type="entry name" value="minC"/>
    <property type="match status" value="1"/>
</dbReference>
<dbReference type="PANTHER" id="PTHR34108">
    <property type="entry name" value="SEPTUM SITE-DETERMINING PROTEIN MINC"/>
    <property type="match status" value="1"/>
</dbReference>
<dbReference type="PANTHER" id="PTHR34108:SF1">
    <property type="entry name" value="SEPTUM SITE-DETERMINING PROTEIN MINC"/>
    <property type="match status" value="1"/>
</dbReference>
<dbReference type="Pfam" id="PF03775">
    <property type="entry name" value="MinC_C"/>
    <property type="match status" value="1"/>
</dbReference>
<dbReference type="Pfam" id="PF05209">
    <property type="entry name" value="MinC_N"/>
    <property type="match status" value="1"/>
</dbReference>
<dbReference type="SUPFAM" id="SSF63848">
    <property type="entry name" value="Cell-division inhibitor MinC, C-terminal domain"/>
    <property type="match status" value="1"/>
</dbReference>
<organism>
    <name type="scientific">Ectopseudomonas mendocina (strain ymp)</name>
    <name type="common">Pseudomonas mendocina</name>
    <dbReference type="NCBI Taxonomy" id="399739"/>
    <lineage>
        <taxon>Bacteria</taxon>
        <taxon>Pseudomonadati</taxon>
        <taxon>Pseudomonadota</taxon>
        <taxon>Gammaproteobacteria</taxon>
        <taxon>Pseudomonadales</taxon>
        <taxon>Pseudomonadaceae</taxon>
        <taxon>Ectopseudomonas</taxon>
    </lineage>
</organism>
<sequence>MSQADLLAQDPVFQLKGSMLAITVMELAHNDLDRLDAQLTEKVAQAPAFFSNTPLVLALDKLPEGEGELNLAELMAVCRRHGLRTLAIRASREGDIAAAEAMDLPVLPPSGARERLLDPAPKKVEEKPAEPEHKPSRIVTSPVRGGQQVYAQGGDLIVLAPVSAGAELLADGNIHVYAPMRGRALAGIKGNTKARIFCQQMGAEMLSIAGHYKVAEDLRRDPLWGDAVHVSLSGDVLNITRL</sequence>
<gene>
    <name evidence="1" type="primary">minC</name>
    <name type="ordered locus">Pmen_1235</name>
</gene>